<comment type="function">
    <text evidence="1">Associates with the EF-Tu.GDP complex and induces the exchange of GDP to GTP. It remains bound to the aminoacyl-tRNA.EF-Tu.GTP complex up to the GTP hydrolysis stage on the ribosome.</text>
</comment>
<comment type="subcellular location">
    <subcellularLocation>
        <location evidence="1">Cytoplasm</location>
    </subcellularLocation>
</comment>
<comment type="similarity">
    <text evidence="1">Belongs to the EF-Ts family.</text>
</comment>
<name>EFTS_STRPZ</name>
<gene>
    <name evidence="1" type="primary">tsf</name>
    <name type="ordered locus">Spy49_1734</name>
</gene>
<sequence length="346" mass="37257">MAEITAKLVKELREKSGAGVMDAKKALVETDGDMDKAVELLREKGMAKAAKKADRVAAEGLTGVYVHGNVAAVVEVNAETDFVAKNAQFVELVNATAKVIAEGKPANNDEALALVMPSGETLAEAYVNATATIGEKISFRRFALIEKTDEQHFGAYQHNGGRIGVISVVEGGDDALAKQVSMHIAAMKPTVLSYTELDAQFIKDELAQLNHAIELDNESRAMVDKPALPFLKYGSKAQLSDDVITAAEADIKAELAAEGKPEKIWDKIIPGKMDRFMLDNTKVDQAYTLLAQVYIMDDSKTVEAYLDSVNAKAIAFARFEVGEGIEKKANDFESEVAATMAAALNN</sequence>
<feature type="chain" id="PRO_1000189886" description="Elongation factor Ts">
    <location>
        <begin position="1"/>
        <end position="346"/>
    </location>
</feature>
<feature type="region of interest" description="Involved in Mg(2+) ion dislocation from EF-Tu" evidence="1">
    <location>
        <begin position="80"/>
        <end position="83"/>
    </location>
</feature>
<accession>B5XIY6</accession>
<proteinExistence type="inferred from homology"/>
<reference key="1">
    <citation type="journal article" date="2008" name="J. Bacteriol.">
        <title>Genome sequence of a nephritogenic and highly transformable M49 strain of Streptococcus pyogenes.</title>
        <authorList>
            <person name="McShan W.M."/>
            <person name="Ferretti J.J."/>
            <person name="Karasawa T."/>
            <person name="Suvorov A.N."/>
            <person name="Lin S."/>
            <person name="Qin B."/>
            <person name="Jia H."/>
            <person name="Kenton S."/>
            <person name="Najar F."/>
            <person name="Wu H."/>
            <person name="Scott J."/>
            <person name="Roe B.A."/>
            <person name="Savic D.J."/>
        </authorList>
    </citation>
    <scope>NUCLEOTIDE SEQUENCE [LARGE SCALE GENOMIC DNA]</scope>
    <source>
        <strain>NZ131</strain>
    </source>
</reference>
<evidence type="ECO:0000255" key="1">
    <source>
        <dbReference type="HAMAP-Rule" id="MF_00050"/>
    </source>
</evidence>
<organism>
    <name type="scientific">Streptococcus pyogenes serotype M49 (strain NZ131)</name>
    <dbReference type="NCBI Taxonomy" id="471876"/>
    <lineage>
        <taxon>Bacteria</taxon>
        <taxon>Bacillati</taxon>
        <taxon>Bacillota</taxon>
        <taxon>Bacilli</taxon>
        <taxon>Lactobacillales</taxon>
        <taxon>Streptococcaceae</taxon>
        <taxon>Streptococcus</taxon>
    </lineage>
</organism>
<dbReference type="EMBL" id="CP000829">
    <property type="protein sequence ID" value="ACI61985.1"/>
    <property type="molecule type" value="Genomic_DNA"/>
</dbReference>
<dbReference type="SMR" id="B5XIY6"/>
<dbReference type="KEGG" id="soz:Spy49_1734"/>
<dbReference type="HOGENOM" id="CLU_047155_0_1_9"/>
<dbReference type="Proteomes" id="UP000001039">
    <property type="component" value="Chromosome"/>
</dbReference>
<dbReference type="GO" id="GO:0005737">
    <property type="term" value="C:cytoplasm"/>
    <property type="evidence" value="ECO:0007669"/>
    <property type="project" value="UniProtKB-SubCell"/>
</dbReference>
<dbReference type="GO" id="GO:0003746">
    <property type="term" value="F:translation elongation factor activity"/>
    <property type="evidence" value="ECO:0007669"/>
    <property type="project" value="UniProtKB-UniRule"/>
</dbReference>
<dbReference type="CDD" id="cd14275">
    <property type="entry name" value="UBA_EF-Ts"/>
    <property type="match status" value="1"/>
</dbReference>
<dbReference type="FunFam" id="1.10.286.20:FF:000004">
    <property type="entry name" value="Elongation factor Ts"/>
    <property type="match status" value="1"/>
</dbReference>
<dbReference type="FunFam" id="1.10.8.10:FF:000001">
    <property type="entry name" value="Elongation factor Ts"/>
    <property type="match status" value="1"/>
</dbReference>
<dbReference type="FunFam" id="3.30.479.20:FF:000013">
    <property type="entry name" value="Elongation factor Ts"/>
    <property type="match status" value="1"/>
</dbReference>
<dbReference type="Gene3D" id="1.10.286.20">
    <property type="match status" value="1"/>
</dbReference>
<dbReference type="Gene3D" id="1.10.8.10">
    <property type="entry name" value="DNA helicase RuvA subunit, C-terminal domain"/>
    <property type="match status" value="1"/>
</dbReference>
<dbReference type="Gene3D" id="3.30.479.20">
    <property type="entry name" value="Elongation factor Ts, dimerisation domain"/>
    <property type="match status" value="2"/>
</dbReference>
<dbReference type="HAMAP" id="MF_00050">
    <property type="entry name" value="EF_Ts"/>
    <property type="match status" value="1"/>
</dbReference>
<dbReference type="InterPro" id="IPR036402">
    <property type="entry name" value="EF-Ts_dimer_sf"/>
</dbReference>
<dbReference type="InterPro" id="IPR001816">
    <property type="entry name" value="Transl_elong_EFTs/EF1B"/>
</dbReference>
<dbReference type="InterPro" id="IPR014039">
    <property type="entry name" value="Transl_elong_EFTs/EF1B_dimer"/>
</dbReference>
<dbReference type="InterPro" id="IPR018101">
    <property type="entry name" value="Transl_elong_Ts_CS"/>
</dbReference>
<dbReference type="InterPro" id="IPR009060">
    <property type="entry name" value="UBA-like_sf"/>
</dbReference>
<dbReference type="NCBIfam" id="TIGR00116">
    <property type="entry name" value="tsf"/>
    <property type="match status" value="1"/>
</dbReference>
<dbReference type="PANTHER" id="PTHR11741">
    <property type="entry name" value="ELONGATION FACTOR TS"/>
    <property type="match status" value="1"/>
</dbReference>
<dbReference type="PANTHER" id="PTHR11741:SF0">
    <property type="entry name" value="ELONGATION FACTOR TS, MITOCHONDRIAL"/>
    <property type="match status" value="1"/>
</dbReference>
<dbReference type="Pfam" id="PF00889">
    <property type="entry name" value="EF_TS"/>
    <property type="match status" value="1"/>
</dbReference>
<dbReference type="SUPFAM" id="SSF54713">
    <property type="entry name" value="Elongation factor Ts (EF-Ts), dimerisation domain"/>
    <property type="match status" value="1"/>
</dbReference>
<dbReference type="SUPFAM" id="SSF46934">
    <property type="entry name" value="UBA-like"/>
    <property type="match status" value="1"/>
</dbReference>
<dbReference type="PROSITE" id="PS01126">
    <property type="entry name" value="EF_TS_1"/>
    <property type="match status" value="1"/>
</dbReference>
<dbReference type="PROSITE" id="PS01127">
    <property type="entry name" value="EF_TS_2"/>
    <property type="match status" value="1"/>
</dbReference>
<protein>
    <recommendedName>
        <fullName evidence="1">Elongation factor Ts</fullName>
        <shortName evidence="1">EF-Ts</shortName>
    </recommendedName>
</protein>
<keyword id="KW-0963">Cytoplasm</keyword>
<keyword id="KW-0251">Elongation factor</keyword>
<keyword id="KW-0648">Protein biosynthesis</keyword>